<keyword id="KW-1185">Reference proteome</keyword>
<protein>
    <recommendedName>
        <fullName>UPF0328 protein ECU03_0010</fullName>
    </recommendedName>
</protein>
<evidence type="ECO:0000256" key="1">
    <source>
        <dbReference type="SAM" id="MobiDB-lite"/>
    </source>
</evidence>
<evidence type="ECO:0000305" key="2"/>
<feature type="chain" id="PRO_0000223115" description="UPF0328 protein ECU03_0010">
    <location>
        <begin position="1"/>
        <end position="276"/>
    </location>
</feature>
<feature type="region of interest" description="Disordered" evidence="1">
    <location>
        <begin position="1"/>
        <end position="132"/>
    </location>
</feature>
<feature type="region of interest" description="Disordered" evidence="1">
    <location>
        <begin position="156"/>
        <end position="176"/>
    </location>
</feature>
<feature type="compositionally biased region" description="Basic and acidic residues" evidence="1">
    <location>
        <begin position="106"/>
        <end position="126"/>
    </location>
</feature>
<sequence length="276" mass="30841">MAAPTQLPETAKPKHSNQSEAGPAPLASPTAPMPRPASHLAPMPSDHPDFRSKSARLRCQPPRTNNCGTFKQPPSVAATSRPKPGNPFLQPPTKGTPPPKKKKKNHTEGCHTHEANPEPNTKHTETEPPIISHCPPPHPGPTATPNLLPCPNPTSSFCQNTRDSPSLPPQRPNMVHIPETPLQRRHSPSQIPIRIPPSPYNLSTAKTYYYLQPPYLPILSHEIHFIVPLLCPYEHHTHNRAARREPATLENNPRHRSIRLNYIPSHHVPHLRRRQF</sequence>
<organism>
    <name type="scientific">Encephalitozoon cuniculi (strain GB-M1)</name>
    <name type="common">Microsporidian parasite</name>
    <dbReference type="NCBI Taxonomy" id="284813"/>
    <lineage>
        <taxon>Eukaryota</taxon>
        <taxon>Fungi</taxon>
        <taxon>Fungi incertae sedis</taxon>
        <taxon>Microsporidia</taxon>
        <taxon>Unikaryonidae</taxon>
        <taxon>Encephalitozoon</taxon>
    </lineage>
</organism>
<accession>Q8SW85</accession>
<reference key="1">
    <citation type="journal article" date="2001" name="Nature">
        <title>Genome sequence and gene compaction of the eukaryote parasite Encephalitozoon cuniculi.</title>
        <authorList>
            <person name="Katinka M.D."/>
            <person name="Duprat S."/>
            <person name="Cornillot E."/>
            <person name="Metenier G."/>
            <person name="Thomarat F."/>
            <person name="Prensier G."/>
            <person name="Barbe V."/>
            <person name="Peyretaillade E."/>
            <person name="Brottier P."/>
            <person name="Wincker P."/>
            <person name="Delbac F."/>
            <person name="El Alaoui H."/>
            <person name="Peyret P."/>
            <person name="Saurin W."/>
            <person name="Gouy M."/>
            <person name="Weissenbach J."/>
            <person name="Vivares C.P."/>
        </authorList>
    </citation>
    <scope>NUCLEOTIDE SEQUENCE [LARGE SCALE GENOMIC DNA]</scope>
    <source>
        <strain>GB-M1</strain>
    </source>
</reference>
<gene>
    <name type="ordered locus">ECU03_0010</name>
</gene>
<name>Y301_ENCCU</name>
<proteinExistence type="inferred from homology"/>
<comment type="similarity">
    <text evidence="2">Belongs to the UPF0328 family.</text>
</comment>
<dbReference type="EMBL" id="AL590443">
    <property type="protein sequence ID" value="CAD26148.1"/>
    <property type="molecule type" value="Genomic_DNA"/>
</dbReference>
<dbReference type="RefSeq" id="NP_597513.1">
    <property type="nucleotide sequence ID" value="NM_001040877.1"/>
</dbReference>
<dbReference type="GeneID" id="858675"/>
<dbReference type="KEGG" id="ecu:ECU03_0010"/>
<dbReference type="VEuPathDB" id="MicrosporidiaDB:ECU03_0010"/>
<dbReference type="HOGENOM" id="CLU_1008410_0_0_1"/>
<dbReference type="InParanoid" id="Q8SW85"/>
<dbReference type="Proteomes" id="UP000000819">
    <property type="component" value="Chromosome III"/>
</dbReference>